<dbReference type="EC" id="5.4.2.12" evidence="1"/>
<dbReference type="EMBL" id="CP000075">
    <property type="protein sequence ID" value="AAY39912.1"/>
    <property type="status" value="ALT_INIT"/>
    <property type="molecule type" value="Genomic_DNA"/>
</dbReference>
<dbReference type="RefSeq" id="WP_004407326.1">
    <property type="nucleotide sequence ID" value="NC_007005.1"/>
</dbReference>
<dbReference type="RefSeq" id="YP_237950.1">
    <property type="nucleotide sequence ID" value="NC_007005.1"/>
</dbReference>
<dbReference type="SMR" id="Q4ZLR0"/>
<dbReference type="STRING" id="205918.Psyr_4885"/>
<dbReference type="KEGG" id="psb:Psyr_4885"/>
<dbReference type="PATRIC" id="fig|205918.7.peg.5050"/>
<dbReference type="eggNOG" id="COG0696">
    <property type="taxonomic scope" value="Bacteria"/>
</dbReference>
<dbReference type="HOGENOM" id="CLU_026099_2_0_6"/>
<dbReference type="OrthoDB" id="9800863at2"/>
<dbReference type="UniPathway" id="UPA00109">
    <property type="reaction ID" value="UER00186"/>
</dbReference>
<dbReference type="Proteomes" id="UP000000426">
    <property type="component" value="Chromosome"/>
</dbReference>
<dbReference type="GO" id="GO:0005829">
    <property type="term" value="C:cytosol"/>
    <property type="evidence" value="ECO:0007669"/>
    <property type="project" value="TreeGrafter"/>
</dbReference>
<dbReference type="GO" id="GO:0030145">
    <property type="term" value="F:manganese ion binding"/>
    <property type="evidence" value="ECO:0007669"/>
    <property type="project" value="UniProtKB-UniRule"/>
</dbReference>
<dbReference type="GO" id="GO:0004619">
    <property type="term" value="F:phosphoglycerate mutase activity"/>
    <property type="evidence" value="ECO:0007669"/>
    <property type="project" value="UniProtKB-EC"/>
</dbReference>
<dbReference type="GO" id="GO:0006007">
    <property type="term" value="P:glucose catabolic process"/>
    <property type="evidence" value="ECO:0007669"/>
    <property type="project" value="InterPro"/>
</dbReference>
<dbReference type="GO" id="GO:0006096">
    <property type="term" value="P:glycolytic process"/>
    <property type="evidence" value="ECO:0007669"/>
    <property type="project" value="UniProtKB-UniRule"/>
</dbReference>
<dbReference type="CDD" id="cd16010">
    <property type="entry name" value="iPGM"/>
    <property type="match status" value="1"/>
</dbReference>
<dbReference type="FunFam" id="3.40.1450.10:FF:000001">
    <property type="entry name" value="2,3-bisphosphoglycerate-independent phosphoglycerate mutase"/>
    <property type="match status" value="1"/>
</dbReference>
<dbReference type="FunFam" id="3.40.720.10:FF:000001">
    <property type="entry name" value="2,3-bisphosphoglycerate-independent phosphoglycerate mutase"/>
    <property type="match status" value="1"/>
</dbReference>
<dbReference type="Gene3D" id="3.40.720.10">
    <property type="entry name" value="Alkaline Phosphatase, subunit A"/>
    <property type="match status" value="1"/>
</dbReference>
<dbReference type="Gene3D" id="3.40.1450.10">
    <property type="entry name" value="BPG-independent phosphoglycerate mutase, domain B"/>
    <property type="match status" value="1"/>
</dbReference>
<dbReference type="HAMAP" id="MF_01038">
    <property type="entry name" value="GpmI"/>
    <property type="match status" value="1"/>
</dbReference>
<dbReference type="InterPro" id="IPR017850">
    <property type="entry name" value="Alkaline_phosphatase_core_sf"/>
</dbReference>
<dbReference type="InterPro" id="IPR011258">
    <property type="entry name" value="BPG-indep_PGM_N"/>
</dbReference>
<dbReference type="InterPro" id="IPR006124">
    <property type="entry name" value="Metalloenzyme"/>
</dbReference>
<dbReference type="InterPro" id="IPR036646">
    <property type="entry name" value="PGAM_B_sf"/>
</dbReference>
<dbReference type="InterPro" id="IPR005995">
    <property type="entry name" value="Pgm_bpd_ind"/>
</dbReference>
<dbReference type="NCBIfam" id="TIGR01307">
    <property type="entry name" value="pgm_bpd_ind"/>
    <property type="match status" value="1"/>
</dbReference>
<dbReference type="PANTHER" id="PTHR31637">
    <property type="entry name" value="2,3-BISPHOSPHOGLYCERATE-INDEPENDENT PHOSPHOGLYCERATE MUTASE"/>
    <property type="match status" value="1"/>
</dbReference>
<dbReference type="PANTHER" id="PTHR31637:SF0">
    <property type="entry name" value="2,3-BISPHOSPHOGLYCERATE-INDEPENDENT PHOSPHOGLYCERATE MUTASE"/>
    <property type="match status" value="1"/>
</dbReference>
<dbReference type="Pfam" id="PF06415">
    <property type="entry name" value="iPGM_N"/>
    <property type="match status" value="1"/>
</dbReference>
<dbReference type="Pfam" id="PF01676">
    <property type="entry name" value="Metalloenzyme"/>
    <property type="match status" value="1"/>
</dbReference>
<dbReference type="PIRSF" id="PIRSF001492">
    <property type="entry name" value="IPGAM"/>
    <property type="match status" value="1"/>
</dbReference>
<dbReference type="SUPFAM" id="SSF64158">
    <property type="entry name" value="2,3-Bisphosphoglycerate-independent phosphoglycerate mutase, substrate-binding domain"/>
    <property type="match status" value="1"/>
</dbReference>
<dbReference type="SUPFAM" id="SSF53649">
    <property type="entry name" value="Alkaline phosphatase-like"/>
    <property type="match status" value="1"/>
</dbReference>
<proteinExistence type="inferred from homology"/>
<organism>
    <name type="scientific">Pseudomonas syringae pv. syringae (strain B728a)</name>
    <dbReference type="NCBI Taxonomy" id="205918"/>
    <lineage>
        <taxon>Bacteria</taxon>
        <taxon>Pseudomonadati</taxon>
        <taxon>Pseudomonadota</taxon>
        <taxon>Gammaproteobacteria</taxon>
        <taxon>Pseudomonadales</taxon>
        <taxon>Pseudomonadaceae</taxon>
        <taxon>Pseudomonas</taxon>
        <taxon>Pseudomonas syringae</taxon>
    </lineage>
</organism>
<keyword id="KW-0324">Glycolysis</keyword>
<keyword id="KW-0413">Isomerase</keyword>
<keyword id="KW-0464">Manganese</keyword>
<keyword id="KW-0479">Metal-binding</keyword>
<gene>
    <name evidence="1" type="primary">gpmI</name>
    <name type="ordered locus">Psyr_4885</name>
</gene>
<name>GPMI_PSEU2</name>
<protein>
    <recommendedName>
        <fullName evidence="1">2,3-bisphosphoglycerate-independent phosphoglycerate mutase</fullName>
        <shortName evidence="1">BPG-independent PGAM</shortName>
        <shortName evidence="1">Phosphoglyceromutase</shortName>
        <shortName evidence="1">iPGM</shortName>
        <ecNumber evidence="1">5.4.2.12</ecNumber>
    </recommendedName>
</protein>
<comment type="function">
    <text evidence="1">Catalyzes the interconversion of 2-phosphoglycerate and 3-phosphoglycerate.</text>
</comment>
<comment type="catalytic activity">
    <reaction evidence="1">
        <text>(2R)-2-phosphoglycerate = (2R)-3-phosphoglycerate</text>
        <dbReference type="Rhea" id="RHEA:15901"/>
        <dbReference type="ChEBI" id="CHEBI:58272"/>
        <dbReference type="ChEBI" id="CHEBI:58289"/>
        <dbReference type="EC" id="5.4.2.12"/>
    </reaction>
</comment>
<comment type="cofactor">
    <cofactor evidence="1">
        <name>Mn(2+)</name>
        <dbReference type="ChEBI" id="CHEBI:29035"/>
    </cofactor>
    <text evidence="1">Binds 2 manganese ions per subunit.</text>
</comment>
<comment type="pathway">
    <text evidence="1">Carbohydrate degradation; glycolysis; pyruvate from D-glyceraldehyde 3-phosphate: step 3/5.</text>
</comment>
<comment type="subunit">
    <text evidence="1">Monomer.</text>
</comment>
<comment type="similarity">
    <text evidence="1">Belongs to the BPG-independent phosphoglycerate mutase family.</text>
</comment>
<comment type="sequence caution" evidence="2">
    <conflict type="erroneous initiation">
        <sequence resource="EMBL-CDS" id="AAY39912"/>
    </conflict>
    <text>Extended N-terminus.</text>
</comment>
<feature type="chain" id="PRO_0000212192" description="2,3-bisphosphoglycerate-independent phosphoglycerate mutase">
    <location>
        <begin position="1"/>
        <end position="510"/>
    </location>
</feature>
<feature type="active site" description="Phosphoserine intermediate" evidence="1">
    <location>
        <position position="64"/>
    </location>
</feature>
<feature type="binding site" evidence="1">
    <location>
        <position position="14"/>
    </location>
    <ligand>
        <name>Mn(2+)</name>
        <dbReference type="ChEBI" id="CHEBI:29035"/>
        <label>2</label>
    </ligand>
</feature>
<feature type="binding site" evidence="1">
    <location>
        <position position="64"/>
    </location>
    <ligand>
        <name>Mn(2+)</name>
        <dbReference type="ChEBI" id="CHEBI:29035"/>
        <label>2</label>
    </ligand>
</feature>
<feature type="binding site" evidence="1">
    <location>
        <position position="125"/>
    </location>
    <ligand>
        <name>substrate</name>
    </ligand>
</feature>
<feature type="binding site" evidence="1">
    <location>
        <begin position="155"/>
        <end position="156"/>
    </location>
    <ligand>
        <name>substrate</name>
    </ligand>
</feature>
<feature type="binding site" evidence="1">
    <location>
        <position position="187"/>
    </location>
    <ligand>
        <name>substrate</name>
    </ligand>
</feature>
<feature type="binding site" evidence="1">
    <location>
        <position position="193"/>
    </location>
    <ligand>
        <name>substrate</name>
    </ligand>
</feature>
<feature type="binding site" evidence="1">
    <location>
        <begin position="259"/>
        <end position="262"/>
    </location>
    <ligand>
        <name>substrate</name>
    </ligand>
</feature>
<feature type="binding site" evidence="1">
    <location>
        <position position="332"/>
    </location>
    <ligand>
        <name>substrate</name>
    </ligand>
</feature>
<feature type="binding site" evidence="1">
    <location>
        <position position="399"/>
    </location>
    <ligand>
        <name>Mn(2+)</name>
        <dbReference type="ChEBI" id="CHEBI:29035"/>
        <label>1</label>
    </ligand>
</feature>
<feature type="binding site" evidence="1">
    <location>
        <position position="403"/>
    </location>
    <ligand>
        <name>Mn(2+)</name>
        <dbReference type="ChEBI" id="CHEBI:29035"/>
        <label>1</label>
    </ligand>
</feature>
<feature type="binding site" evidence="1">
    <location>
        <position position="440"/>
    </location>
    <ligand>
        <name>Mn(2+)</name>
        <dbReference type="ChEBI" id="CHEBI:29035"/>
        <label>2</label>
    </ligand>
</feature>
<feature type="binding site" evidence="1">
    <location>
        <position position="441"/>
    </location>
    <ligand>
        <name>Mn(2+)</name>
        <dbReference type="ChEBI" id="CHEBI:29035"/>
        <label>2</label>
    </ligand>
</feature>
<feature type="binding site" evidence="1">
    <location>
        <position position="459"/>
    </location>
    <ligand>
        <name>Mn(2+)</name>
        <dbReference type="ChEBI" id="CHEBI:29035"/>
        <label>1</label>
    </ligand>
</feature>
<reference key="1">
    <citation type="journal article" date="2005" name="Proc. Natl. Acad. Sci. U.S.A.">
        <title>Comparison of the complete genome sequences of Pseudomonas syringae pv. syringae B728a and pv. tomato DC3000.</title>
        <authorList>
            <person name="Feil H."/>
            <person name="Feil W.S."/>
            <person name="Chain P."/>
            <person name="Larimer F."/>
            <person name="Dibartolo G."/>
            <person name="Copeland A."/>
            <person name="Lykidis A."/>
            <person name="Trong S."/>
            <person name="Nolan M."/>
            <person name="Goltsman E."/>
            <person name="Thiel J."/>
            <person name="Malfatti S."/>
            <person name="Loper J.E."/>
            <person name="Lapidus A."/>
            <person name="Detter J.C."/>
            <person name="Land M."/>
            <person name="Richardson P.M."/>
            <person name="Kyrpides N.C."/>
            <person name="Ivanova N."/>
            <person name="Lindow S.E."/>
        </authorList>
    </citation>
    <scope>NUCLEOTIDE SEQUENCE [LARGE SCALE GENOMIC DNA]</scope>
    <source>
        <strain>B728a</strain>
    </source>
</reference>
<sequence length="510" mass="55426">MTATPKPLVLIILDGFGHSESHKGNAILAAKMPVMDRLYQTMPNGLISGSGMDVGLPDGQMGNSEVGHMNLGAGRVVYQDFTRVTKAIRDGEFFENPTICAAVDKAVSAGKAVHIMGLLSDGGVHSHQDHLVAMAELAVKRGAEKIYLHAFLDGRDTPPRSAKKSLELMDATFARLGKGRTATIVGRYFAMDRDNRWDRVSSAYNLIVDSTADFHADSAVAGLEAAYARDENDEFVKATRIGEAARVEDGDAVVFMNFRADRARELTRVFVEDDFKDFERARQPKVNYVMLTQYAASIPAPSAFAAGSLKNVLGEYLADNGKTQLRIAETEKYAHVTFFFSGGREEPFPGEERILIPSPKVATYDLQPEMSAPEVTDKIVDAIEHQRYDVIVVNYANGDMVGHSGIMEAAIKAVECLDVCVGRIAEALEKVGGEALITADHGNVEQMTDDSTGQAHTAHTSEPVPFVYVGKRQLKVRQGGVLADVAPTMLHLLGMEKPQEMTGHSILVAE</sequence>
<accession>Q4ZLR0</accession>
<evidence type="ECO:0000255" key="1">
    <source>
        <dbReference type="HAMAP-Rule" id="MF_01038"/>
    </source>
</evidence>
<evidence type="ECO:0000305" key="2"/>